<sequence length="11" mass="1387">QTFQYSRGWTN</sequence>
<organism>
    <name type="scientific">Pachyphasma brandbergense</name>
    <name type="common">Gladiator</name>
    <name type="synonym">Heel-walker</name>
    <dbReference type="NCBI Taxonomy" id="1041430"/>
    <lineage>
        <taxon>Eukaryota</taxon>
        <taxon>Metazoa</taxon>
        <taxon>Ecdysozoa</taxon>
        <taxon>Arthropoda</taxon>
        <taxon>Hexapoda</taxon>
        <taxon>Insecta</taxon>
        <taxon>Pterygota</taxon>
        <taxon>Neoptera</taxon>
        <taxon>Polyneoptera</taxon>
        <taxon>Mantophasmatodea</taxon>
        <taxon>Mantophasmatidae</taxon>
        <taxon>Pachyphasma</taxon>
    </lineage>
</organism>
<name>CORZ_PACBA</name>
<proteinExistence type="evidence at protein level"/>
<evidence type="ECO:0000250" key="1">
    <source>
        <dbReference type="UniProtKB" id="Q26377"/>
    </source>
</evidence>
<evidence type="ECO:0000255" key="2"/>
<evidence type="ECO:0000269" key="3">
    <source>
    </source>
</evidence>
<evidence type="ECO:0000303" key="4">
    <source>
    </source>
</evidence>
<evidence type="ECO:0000305" key="5"/>
<evidence type="ECO:0000305" key="6">
    <source>
    </source>
</evidence>
<feature type="peptide" id="PRO_0000421707" description="Corazonin" evidence="3">
    <location>
        <begin position="1"/>
        <end position="11"/>
    </location>
</feature>
<feature type="modified residue" description="Pyrrolidone carboxylic acid" evidence="3">
    <location>
        <position position="1"/>
    </location>
</feature>
<feature type="modified residue" description="Asparagine amide" evidence="3">
    <location>
        <position position="11"/>
    </location>
</feature>
<comment type="function">
    <text evidence="1">Cardioactive peptide. Corazonin is probably involved in the physiological regulation of the heart beat (By similarity).</text>
</comment>
<comment type="subcellular location">
    <subcellularLocation>
        <location evidence="6">Secreted</location>
    </subcellularLocation>
</comment>
<comment type="similarity">
    <text evidence="2">Belongs to the corazonin family.</text>
</comment>
<dbReference type="GO" id="GO:0005576">
    <property type="term" value="C:extracellular region"/>
    <property type="evidence" value="ECO:0007669"/>
    <property type="project" value="UniProtKB-SubCell"/>
</dbReference>
<dbReference type="GO" id="GO:0007218">
    <property type="term" value="P:neuropeptide signaling pathway"/>
    <property type="evidence" value="ECO:0007669"/>
    <property type="project" value="UniProtKB-KW"/>
</dbReference>
<protein>
    <recommendedName>
        <fullName evidence="4">Corazonin</fullName>
    </recommendedName>
</protein>
<keyword id="KW-0027">Amidation</keyword>
<keyword id="KW-0903">Direct protein sequencing</keyword>
<keyword id="KW-0527">Neuropeptide</keyword>
<keyword id="KW-0873">Pyrrolidone carboxylic acid</keyword>
<keyword id="KW-0964">Secreted</keyword>
<reference evidence="5" key="1">
    <citation type="journal article" date="2012" name="Syst. Biol.">
        <title>Peptidomics-based phylogeny and biogeography of Mantophasmatodea (Hexapoda).</title>
        <authorList>
            <person name="Predel R."/>
            <person name="Neupert S."/>
            <person name="Huetteroth W."/>
            <person name="Kahnt J."/>
            <person name="Waidelich D."/>
            <person name="Roth S."/>
        </authorList>
    </citation>
    <scope>PROTEIN SEQUENCE</scope>
    <scope>PYROGLUTAMATE FORMATION AT GLN-1</scope>
    <scope>AMIDATION AT ASN-11</scope>
    <source>
        <tissue evidence="3">Corpora cardiaca</tissue>
    </source>
</reference>
<accession>B3A0L1</accession>